<reference key="1">
    <citation type="journal article" date="1986" name="J. Biol. Chem.">
        <title>Phosphoribosylpyrophosphate synthetase of Escherichia coli. Properties of the purified enzyme and primary structure of the prs gene.</title>
        <authorList>
            <person name="Hove-Jensen B."/>
            <person name="Harlow K.W."/>
            <person name="King C.J."/>
            <person name="Switzer R.L."/>
        </authorList>
    </citation>
    <scope>NUCLEOTIDE SEQUENCE [GENOMIC DNA]</scope>
    <scope>PROTEIN SEQUENCE OF 2-11</scope>
    <scope>FUNCTION</scope>
    <scope>CATALYTIC ACTIVITY</scope>
    <scope>BIOPHYSICOCHEMICAL PROPERTIES</scope>
    <scope>ACTIVITY REGULATION</scope>
    <scope>COFACTOR</scope>
</reference>
<reference key="2">
    <citation type="journal article" date="1989" name="J. Biol. Chem.">
        <title>Characterization of the Escherichia coli prsA1-encoded mutant phosphoribosylpyrophosphate synthetase identifies a divalent cation-nucleotide binding site.</title>
        <authorList>
            <person name="Bower S.G."/>
            <person name="Harlow K.W."/>
            <person name="Switzer R.L."/>
            <person name="Hove-Jensen B."/>
        </authorList>
    </citation>
    <scope>SEQUENCE REVISION TO 127</scope>
    <scope>FUNCTION</scope>
    <scope>CATALYTIC ACTIVITY</scope>
    <scope>BIOPHYSICOCHEMICAL PROPERTIES</scope>
    <scope>COFACTOR</scope>
    <scope>ACTIVITY REGULATION</scope>
    <scope>MUTANT PRSA1</scope>
</reference>
<reference key="3">
    <citation type="journal article" date="1996" name="DNA Res.">
        <title>A 718-kb DNA sequence of the Escherichia coli K-12 genome corresponding to the 12.7-28.0 min region on the linkage map.</title>
        <authorList>
            <person name="Oshima T."/>
            <person name="Aiba H."/>
            <person name="Baba T."/>
            <person name="Fujita K."/>
            <person name="Hayashi K."/>
            <person name="Honjo A."/>
            <person name="Ikemoto K."/>
            <person name="Inada T."/>
            <person name="Itoh T."/>
            <person name="Kajihara M."/>
            <person name="Kanai K."/>
            <person name="Kashimoto K."/>
            <person name="Kimura S."/>
            <person name="Kitagawa M."/>
            <person name="Makino K."/>
            <person name="Masuda S."/>
            <person name="Miki T."/>
            <person name="Mizobuchi K."/>
            <person name="Mori H."/>
            <person name="Motomura K."/>
            <person name="Nakamura Y."/>
            <person name="Nashimoto H."/>
            <person name="Nishio Y."/>
            <person name="Saito N."/>
            <person name="Sampei G."/>
            <person name="Seki Y."/>
            <person name="Tagami H."/>
            <person name="Takemoto K."/>
            <person name="Wada C."/>
            <person name="Yamamoto Y."/>
            <person name="Yano M."/>
            <person name="Horiuchi T."/>
        </authorList>
    </citation>
    <scope>NUCLEOTIDE SEQUENCE [LARGE SCALE GENOMIC DNA]</scope>
    <source>
        <strain>K12 / W3110 / ATCC 27325 / DSM 5911</strain>
    </source>
</reference>
<reference key="4">
    <citation type="journal article" date="1997" name="Science">
        <title>The complete genome sequence of Escherichia coli K-12.</title>
        <authorList>
            <person name="Blattner F.R."/>
            <person name="Plunkett G. III"/>
            <person name="Bloch C.A."/>
            <person name="Perna N.T."/>
            <person name="Burland V."/>
            <person name="Riley M."/>
            <person name="Collado-Vides J."/>
            <person name="Glasner J.D."/>
            <person name="Rode C.K."/>
            <person name="Mayhew G.F."/>
            <person name="Gregor J."/>
            <person name="Davis N.W."/>
            <person name="Kirkpatrick H.A."/>
            <person name="Goeden M.A."/>
            <person name="Rose D.J."/>
            <person name="Mau B."/>
            <person name="Shao Y."/>
        </authorList>
    </citation>
    <scope>NUCLEOTIDE SEQUENCE [LARGE SCALE GENOMIC DNA]</scope>
    <source>
        <strain>K12 / MG1655 / ATCC 47076</strain>
    </source>
</reference>
<reference key="5">
    <citation type="journal article" date="2006" name="Mol. Syst. Biol.">
        <title>Highly accurate genome sequences of Escherichia coli K-12 strains MG1655 and W3110.</title>
        <authorList>
            <person name="Hayashi K."/>
            <person name="Morooka N."/>
            <person name="Yamamoto Y."/>
            <person name="Fujita K."/>
            <person name="Isono K."/>
            <person name="Choi S."/>
            <person name="Ohtsubo E."/>
            <person name="Baba T."/>
            <person name="Wanner B.L."/>
            <person name="Mori H."/>
            <person name="Horiuchi T."/>
        </authorList>
    </citation>
    <scope>NUCLEOTIDE SEQUENCE [LARGE SCALE GENOMIC DNA]</scope>
    <source>
        <strain>K12 / W3110 / ATCC 27325 / DSM 5911</strain>
    </source>
</reference>
<reference key="6">
    <citation type="journal article" date="1997" name="Electrophoresis">
        <title>Comparing the predicted and observed properties of proteins encoded in the genome of Escherichia coli K-12.</title>
        <authorList>
            <person name="Link A.J."/>
            <person name="Robison K."/>
            <person name="Church G.M."/>
        </authorList>
    </citation>
    <scope>PROTEIN SEQUENCE OF 2-12</scope>
    <source>
        <strain>K12 / EMG2</strain>
    </source>
</reference>
<reference key="7">
    <citation type="journal article" date="1982" name="Eur. J. Biochem.">
        <title>Phosphoribosylpyrophosphate synthetase of Escherichia coli, Identification of a mutant enzyme.</title>
        <authorList>
            <person name="Hove-Jensen B."/>
            <person name="Nygaard P."/>
        </authorList>
    </citation>
    <scope>FUNCTION</scope>
    <scope>CATALYTIC ACTIVITY</scope>
    <scope>DISRUPTION PHENOTYPE</scope>
    <scope>ACTIVITY REGULATION</scope>
    <scope>NOMENCLATURE</scope>
</reference>
<reference key="8">
    <citation type="journal article" date="1995" name="J. Biol. Chem.">
        <title>Inactivation of Escherichia coli phosphoribosylpyrophosphate synthetase by the 2',3'-dialdehyde derivative of ATP. Identification of active site lysines.</title>
        <authorList>
            <person name="Hilden I."/>
            <person name="Hove-Jensen B."/>
            <person name="Harlow K.W."/>
        </authorList>
    </citation>
    <scope>FUNCTION</scope>
    <scope>CATALYTIC ACTIVITY</scope>
    <scope>ACTIVITY REGULATION</scope>
    <scope>ACTIVE SITE</scope>
</reference>
<reference key="9">
    <citation type="journal article" date="1996" name="Biochemistry">
        <title>Effects of mutagenesis of aspartic acid residues in the putative phosphoribosyl diphosphate binding site of Escherichia coli phosphoribosyl diphosphate synthetase on metal ion specificity and ribose 5-phosphate binding.</title>
        <authorList>
            <person name="Willemoes M."/>
            <person name="Nilsson D."/>
            <person name="Hove-Jensen B."/>
        </authorList>
    </citation>
    <scope>FUNCTION</scope>
    <scope>CATALYTIC ACTIVITY</scope>
    <scope>MUTAGENESIS OF ASP-220; ASP-221 AND ASP-224</scope>
    <scope>COFACTOR</scope>
    <scope>BIOPHYSICOCHEMICAL PROPERTIES</scope>
    <scope>PATHWAY</scope>
</reference>
<reference key="10">
    <citation type="journal article" date="1997" name="Biochemistry">
        <title>Binding of divalent magnesium by Escherichia coli phosphoribosyl diphosphate synthetase.</title>
        <authorList>
            <person name="Willemoes M."/>
            <person name="Hove-Jensen B."/>
        </authorList>
    </citation>
    <scope>FUNCTION</scope>
    <scope>CATALYTIC ACTIVITY</scope>
    <scope>ACTIVITY REGULATION</scope>
    <scope>COFACTOR</scope>
</reference>
<reference key="11">
    <citation type="journal article" date="2000" name="J. Biol. Chem.">
        <title>Steady state kinetic model for the binding of substrates and allosteric effectors to Escherichia coli phosphoribosyl-diphosphate synthase.</title>
        <authorList>
            <person name="Willemoes M."/>
            <person name="Hove-Jensen B."/>
            <person name="Larsen S."/>
        </authorList>
    </citation>
    <scope>FUNCTION</scope>
    <scope>CATALYTIC ACTIVITY</scope>
    <scope>ACTIVITY REGULATION</scope>
    <scope>COFACTOR</scope>
</reference>
<reference key="12">
    <citation type="journal article" date="2017" name="Microbiol. Mol. Biol. Rev.">
        <title>Phosphoribosyl diphosphate (PRPP): biosynthesis, enzymology, utilization, and metabolic significance.</title>
        <authorList>
            <person name="Hove-Jensen B."/>
            <person name="Andersen K.R."/>
            <person name="Kilstrup M."/>
            <person name="Martinussen J."/>
            <person name="Switzer R.L."/>
            <person name="Willemoes M."/>
        </authorList>
    </citation>
    <scope>REVIEW</scope>
    <scope>COFACTOR</scope>
</reference>
<reference key="13">
    <citation type="submission" date="2015-01" db="PDB data bank">
        <title>Crystal structure of the phosphoribosylpyrophosphate synthetase from E. Coli.</title>
        <authorList>
            <person name="Timofeev V.I."/>
            <person name="Abramchik Y.A."/>
            <person name="Muravieva T.I."/>
            <person name="Iaroslavtceva A.K."/>
            <person name="Stepanenko V.N."/>
            <person name="Zhukhlistova N.E."/>
            <person name="Esipov R.S."/>
            <person name="Kuranova I.P."/>
        </authorList>
    </citation>
    <scope>X-RAY CRYSTALLOGRAPHY (2.71 ANGSTROMS) OF 2-315 IN COMPLEX WITH MAGNESIUM IONS</scope>
    <scope>COFACTOR</scope>
</reference>
<comment type="function">
    <text evidence="1 2 3 4 5 6 7 8">Involved in the biosynthesis of the central metabolite phospho-alpha-D-ribosyl-1-pyrophosphate (PRPP) via the transfer of pyrophosphoryl group from ATP to 1-hydroxyl of ribose-5-phosphate (Rib-5-P).</text>
</comment>
<comment type="catalytic activity">
    <reaction evidence="1 3 4 5 7 13 14 16">
        <text>D-ribose 5-phosphate + ATP = 5-phospho-alpha-D-ribose 1-diphosphate + AMP + H(+)</text>
        <dbReference type="Rhea" id="RHEA:15609"/>
        <dbReference type="ChEBI" id="CHEBI:15378"/>
        <dbReference type="ChEBI" id="CHEBI:30616"/>
        <dbReference type="ChEBI" id="CHEBI:58017"/>
        <dbReference type="ChEBI" id="CHEBI:78346"/>
        <dbReference type="ChEBI" id="CHEBI:456215"/>
        <dbReference type="EC" id="2.7.6.1"/>
    </reaction>
</comment>
<comment type="cofactor">
    <cofactor evidence="1 2 3 4 7 8 17">
        <name>Mg(2+)</name>
        <dbReference type="ChEBI" id="CHEBI:18420"/>
    </cofactor>
    <text evidence="2 3 4 7 8 10">Binds 2 Mg(2+) ions per subunit (Probable). Mn(2+), Co(2+) and Cd(2+) are also accepted (PubMed:10954724, PubMed:2542328, PubMed:3009477, PubMed:8679571, PubMed:9125530).</text>
</comment>
<comment type="activity regulation">
    <text evidence="2 3 4 5 6 8">Activated by inorganic phosphate (PubMed:10954724, PubMed:3009477). In addition to form a complex with ATP, Mg(2+) also acts as a cofactor (PubMed:9125530). Strongly inhibited by ADP through competitive binding at the activation site and at a specific allosteric site (PubMed:3009477, PubMed:6290219, PubMed:9125530). Competitively inhibited by Ca(2+) and ribose 1,5-bisphosphate (Rib-1,5-P2) (PubMed:2542328, PubMed:9125530). Less strongly inhibited by AMP, alpha,beta-methylene ATP (mATP), (2',3'-dialdehyde)-ATP (oATP) and 1-alpha,2-alpha,3-alpha-trihydroxy-4-beta-cyclopentanemethanol 5-phosphate (cRib-5-P) (PubMed:2542328, PubMed:7657655, PubMed:9125530).</text>
</comment>
<comment type="biophysicochemical properties">
    <kinetics>
        <KM evidence="4">138 uM for Rib-5-P (at pH 8 and 37 degrees Celsius)</KM>
        <KM evidence="3">230 uM for ATP (at pH 8 and 37 degrees Celsius)</KM>
        <KM evidence="7">280 uM for Rib-5-P (at pH 8.5 and 37 degrees Celsius)</KM>
        <KM evidence="3">300 uM for Rib-5-P (with 20 mM ATP at pH 8 and 37 degrees Celsius)</KM>
        <Vmax evidence="7">129.0 umol/min/mg enzyme toward Rib-5-P (at pH 8.5 and 37 degrees Celsius)</Vmax>
        <Vmax evidence="7">143.0 umol/min/mg enzyme toward ATP (at pH 8.5 and 37 degrees Celsius)</Vmax>
    </kinetics>
    <phDependence>
        <text evidence="4">Optimum pH is 9.7-9.8.</text>
    </phDependence>
</comment>
<comment type="pathway">
    <text evidence="1 15">Metabolic intermediate biosynthesis; 5-phospho-alpha-D-ribose 1-diphosphate biosynthesis; 5-phospho-alpha-D-ribose 1-diphosphate from D-ribose 5-phosphate (route I): step 1/1.</text>
</comment>
<comment type="subunit">
    <text evidence="1">Homohexamer.</text>
</comment>
<comment type="interaction">
    <interactant intactId="EBI-906827">
        <id>P0A717</id>
    </interactant>
    <interactant intactId="EBI-543750">
        <id>P0A6F5</id>
        <label>groEL</label>
    </interactant>
    <organismsDiffer>false</organismsDiffer>
    <experiments>2</experiments>
</comment>
<comment type="subcellular location">
    <subcellularLocation>
        <location evidence="1">Cytoplasm</location>
    </subcellularLocation>
</comment>
<comment type="disruption phenotype">
    <text evidence="5">Cells lacking this gene are unable to grow on nucleosides as purine source.</text>
</comment>
<comment type="miscellaneous">
    <text evidence="2">This enzyme uses a steady state ordered mechanism, where Mg(2+) binds first, followed by Mg-ATP and lastly, ribose 5-phosphate.</text>
</comment>
<comment type="similarity">
    <text evidence="1 10">Belongs to the ribose-phosphate pyrophosphokinase family. Class I subfamily.</text>
</comment>
<comment type="caution">
    <text evidence="10 17">Although Mg(2+) has been found in crystallography study, the positions do not correspond to the correct residues.</text>
</comment>
<sequence>MPDMKLFAGNATPELAQRIANRLYTSLGDAAVGRFSDGEVSVQINENVRGGDIFIIQSTCAPTNDNLMELVVMVDALRRASAGRITAVIPYFGYARQDRRVRSARVPITAKVVADFLSSVGVDRVLTVDLHAEQIQGFFDVPVDNVFGSPILLEDMLQLNLDNPIVVSPDIGGVVRARAIAKLLNDTDMAIIDKRRPRANVSQVMHIIGDVAGRDCVLVDDMIDTGGTLCKAAEALKERGAKRVFAYATHPIFSGNAANNLRNSVIDEVVVCDTIPLSDEIKSLPNVRTLTLSGMLAEAIRRISNEESISAMFEH</sequence>
<keyword id="KW-0002">3D-structure</keyword>
<keyword id="KW-0021">Allosteric enzyme</keyword>
<keyword id="KW-0067">ATP-binding</keyword>
<keyword id="KW-0963">Cytoplasm</keyword>
<keyword id="KW-0903">Direct protein sequencing</keyword>
<keyword id="KW-0418">Kinase</keyword>
<keyword id="KW-0460">Magnesium</keyword>
<keyword id="KW-0464">Manganese</keyword>
<keyword id="KW-0479">Metal-binding</keyword>
<keyword id="KW-0545">Nucleotide biosynthesis</keyword>
<keyword id="KW-0547">Nucleotide-binding</keyword>
<keyword id="KW-1185">Reference proteome</keyword>
<keyword id="KW-0808">Transferase</keyword>
<evidence type="ECO:0000255" key="1">
    <source>
        <dbReference type="HAMAP-Rule" id="MF_00583"/>
    </source>
</evidence>
<evidence type="ECO:0000269" key="2">
    <source>
    </source>
</evidence>
<evidence type="ECO:0000269" key="3">
    <source>
    </source>
</evidence>
<evidence type="ECO:0000269" key="4">
    <source>
    </source>
</evidence>
<evidence type="ECO:0000269" key="5">
    <source>
    </source>
</evidence>
<evidence type="ECO:0000269" key="6">
    <source>
    </source>
</evidence>
<evidence type="ECO:0000269" key="7">
    <source>
    </source>
</evidence>
<evidence type="ECO:0000269" key="8">
    <source>
    </source>
</evidence>
<evidence type="ECO:0000269" key="9">
    <source>
    </source>
</evidence>
<evidence type="ECO:0000303" key="10">
    <source>
    </source>
</evidence>
<evidence type="ECO:0000303" key="11">
    <source>
    </source>
</evidence>
<evidence type="ECO:0000305" key="12"/>
<evidence type="ECO:0000305" key="13">
    <source>
    </source>
</evidence>
<evidence type="ECO:0000305" key="14">
    <source>
    </source>
</evidence>
<evidence type="ECO:0000305" key="15">
    <source>
    </source>
</evidence>
<evidence type="ECO:0000305" key="16">
    <source>
    </source>
</evidence>
<evidence type="ECO:0000305" key="17">
    <source ref="13"/>
</evidence>
<evidence type="ECO:0007829" key="18">
    <source>
        <dbReference type="PDB" id="4S2U"/>
    </source>
</evidence>
<evidence type="ECO:0007829" key="19">
    <source>
        <dbReference type="PDB" id="6ASV"/>
    </source>
</evidence>
<protein>
    <recommendedName>
        <fullName evidence="1 11">Ribose-phosphate pyrophosphokinase</fullName>
        <shortName evidence="1 11">RPPK</shortName>
        <ecNumber evidence="3 4 5 7 13 14 16">2.7.6.1</ecNumber>
    </recommendedName>
    <alternativeName>
        <fullName evidence="1">5-phospho-D-ribosyl alpha-1-diphosphate synthase</fullName>
    </alternativeName>
    <alternativeName>
        <fullName evidence="1">Phosphoribosyl diphosphate synthase</fullName>
    </alternativeName>
    <alternativeName>
        <fullName evidence="1 11">Phosphoribosyl pyrophosphate synthase</fullName>
        <shortName evidence="1">P-Rib-PP synthase</shortName>
        <shortName evidence="1">PRPP synthase</shortName>
        <shortName evidence="1">PRPPase</shortName>
    </alternativeName>
</protein>
<organism>
    <name type="scientific">Escherichia coli (strain K12)</name>
    <dbReference type="NCBI Taxonomy" id="83333"/>
    <lineage>
        <taxon>Bacteria</taxon>
        <taxon>Pseudomonadati</taxon>
        <taxon>Pseudomonadota</taxon>
        <taxon>Gammaproteobacteria</taxon>
        <taxon>Enterobacterales</taxon>
        <taxon>Enterobacteriaceae</taxon>
        <taxon>Escherichia</taxon>
    </lineage>
</organism>
<gene>
    <name evidence="1 11" type="primary">prs</name>
    <name type="synonym">prsA</name>
    <name type="ordered locus">b1207</name>
    <name type="ordered locus">JW1198</name>
</gene>
<proteinExistence type="evidence at protein level"/>
<accession>P0A717</accession>
<accession>P08330</accession>
<accession>P76828</accession>
<accession>P78058</accession>
<name>KPRS_ECOLI</name>
<feature type="initiator methionine" description="Removed" evidence="4 9">
    <location>
        <position position="1"/>
    </location>
</feature>
<feature type="chain" id="PRO_0000141134" description="Ribose-phosphate pyrophosphokinase">
    <location>
        <begin position="2"/>
        <end position="315"/>
    </location>
</feature>
<feature type="active site" evidence="14">
    <location>
        <position position="194"/>
    </location>
</feature>
<feature type="binding site" evidence="1">
    <location>
        <begin position="37"/>
        <end position="39"/>
    </location>
    <ligand>
        <name>ATP</name>
        <dbReference type="ChEBI" id="CHEBI:30616"/>
    </ligand>
</feature>
<feature type="binding site" evidence="1">
    <location>
        <begin position="96"/>
        <end position="97"/>
    </location>
    <ligand>
        <name>ATP</name>
        <dbReference type="ChEBI" id="CHEBI:30616"/>
    </ligand>
</feature>
<feature type="binding site" evidence="1">
    <location>
        <position position="131"/>
    </location>
    <ligand>
        <name>Mg(2+)</name>
        <dbReference type="ChEBI" id="CHEBI:18420"/>
        <label>1</label>
    </ligand>
</feature>
<feature type="binding site" evidence="1">
    <location>
        <position position="170"/>
    </location>
    <ligand>
        <name>Mg(2+)</name>
        <dbReference type="ChEBI" id="CHEBI:18420"/>
        <label>2</label>
    </ligand>
</feature>
<feature type="binding site" evidence="1">
    <location>
        <position position="196"/>
    </location>
    <ligand>
        <name>D-ribose 5-phosphate</name>
        <dbReference type="ChEBI" id="CHEBI:78346"/>
    </ligand>
</feature>
<feature type="binding site" evidence="1">
    <location>
        <position position="220"/>
    </location>
    <ligand>
        <name>D-ribose 5-phosphate</name>
        <dbReference type="ChEBI" id="CHEBI:78346"/>
    </ligand>
</feature>
<feature type="binding site" evidence="1">
    <location>
        <begin position="224"/>
        <end position="228"/>
    </location>
    <ligand>
        <name>D-ribose 5-phosphate</name>
        <dbReference type="ChEBI" id="CHEBI:78346"/>
    </ligand>
</feature>
<feature type="sequence variant" description="In mutant PRSA1; alters the binding of divalent cations, especially magnesium. Little alteration in the affinity for ribose 5-phosphate and 27-fold decrease of the affinity for ATP. Absence of inhibition by AMP." evidence="3">
    <original>D</original>
    <variation>A</variation>
    <location>
        <position position="129"/>
    </location>
</feature>
<feature type="mutagenesis site" description="4-fold decrease in the affinity binding for Rib-5-P in the presence of magnesium ions. In the presence of cobalt ions, it shows a 15-fold decrease in the affinity binding for Rib-5-P." evidence="7">
    <original>D</original>
    <variation>E</variation>
    <location>
        <position position="220"/>
    </location>
</feature>
<feature type="mutagenesis site" description="With magnesium or manganese ions, the affinity binding values for ATP and Rib-5-P are comparable to those of the wild-type." evidence="7">
    <original>D</original>
    <variation>F</variation>
    <location>
        <position position="220"/>
    </location>
</feature>
<feature type="mutagenesis site" description="The affinity binding for ATP is comparable to those of the wild-type, apart from a slight decrease in the presence of manganese ions. The affinity binding for Rib-5-P is greatly decreased in the presence of both manganese and cobalt ions but only about 2-fold in the presence of magnesium ions." evidence="7">
    <original>D</original>
    <variation>A</variation>
    <location>
        <position position="221"/>
    </location>
</feature>
<feature type="mutagenesis site" description="With magnesium or manganese ions, the affinity binding values for ATP and Rib-5-P are comparable to those of the wild-type." evidence="7">
    <original>D</original>
    <variation>A</variation>
    <location>
        <position position="224"/>
    </location>
</feature>
<feature type="mutagenesis site" description="With magnesium or manganese ions, the affinity binding values for ATP and Rib-5-P are comparable to those of the wild-type." evidence="7">
    <original>D</original>
    <variation>S</variation>
    <location>
        <position position="224"/>
    </location>
</feature>
<feature type="sequence conflict" description="In Ref. 1; AAA24431." evidence="12" ref="1">
    <original>T</original>
    <variation>I</variation>
    <location>
        <position position="127"/>
    </location>
</feature>
<feature type="strand" evidence="19">
    <location>
        <begin position="4"/>
        <end position="8"/>
    </location>
</feature>
<feature type="strand" evidence="19">
    <location>
        <begin position="10"/>
        <end position="12"/>
    </location>
</feature>
<feature type="helix" evidence="19">
    <location>
        <begin position="13"/>
        <end position="22"/>
    </location>
</feature>
<feature type="strand" evidence="19">
    <location>
        <begin position="30"/>
        <end position="34"/>
    </location>
</feature>
<feature type="strand" evidence="19">
    <location>
        <begin position="40"/>
        <end position="44"/>
    </location>
</feature>
<feature type="strand" evidence="19">
    <location>
        <begin position="52"/>
        <end position="56"/>
    </location>
</feature>
<feature type="helix" evidence="19">
    <location>
        <begin position="63"/>
        <end position="79"/>
    </location>
</feature>
<feature type="strand" evidence="19">
    <location>
        <begin position="82"/>
        <end position="91"/>
    </location>
</feature>
<feature type="turn" evidence="19">
    <location>
        <begin position="93"/>
        <end position="96"/>
    </location>
</feature>
<feature type="helix" evidence="19">
    <location>
        <begin position="101"/>
        <end position="103"/>
    </location>
</feature>
<feature type="helix" evidence="19">
    <location>
        <begin position="109"/>
        <end position="120"/>
    </location>
</feature>
<feature type="strand" evidence="19">
    <location>
        <begin position="124"/>
        <end position="129"/>
    </location>
</feature>
<feature type="helix" evidence="19">
    <location>
        <begin position="133"/>
        <end position="138"/>
    </location>
</feature>
<feature type="strand" evidence="19">
    <location>
        <begin position="143"/>
        <end position="146"/>
    </location>
</feature>
<feature type="helix" evidence="19">
    <location>
        <begin position="149"/>
        <end position="158"/>
    </location>
</feature>
<feature type="strand" evidence="19">
    <location>
        <begin position="165"/>
        <end position="170"/>
    </location>
</feature>
<feature type="helix" evidence="19">
    <location>
        <begin position="171"/>
        <end position="173"/>
    </location>
</feature>
<feature type="helix" evidence="19">
    <location>
        <begin position="174"/>
        <end position="183"/>
    </location>
</feature>
<feature type="turn" evidence="19">
    <location>
        <begin position="184"/>
        <end position="186"/>
    </location>
</feature>
<feature type="strand" evidence="19">
    <location>
        <begin position="188"/>
        <end position="194"/>
    </location>
</feature>
<feature type="strand" evidence="18">
    <location>
        <begin position="198"/>
        <end position="200"/>
    </location>
</feature>
<feature type="strand" evidence="19">
    <location>
        <begin position="205"/>
        <end position="209"/>
    </location>
</feature>
<feature type="strand" evidence="19">
    <location>
        <begin position="216"/>
        <end position="225"/>
    </location>
</feature>
<feature type="helix" evidence="19">
    <location>
        <begin position="227"/>
        <end position="238"/>
    </location>
</feature>
<feature type="strand" evidence="19">
    <location>
        <begin position="244"/>
        <end position="251"/>
    </location>
</feature>
<feature type="helix" evidence="19">
    <location>
        <begin position="257"/>
        <end position="262"/>
    </location>
</feature>
<feature type="strand" evidence="19">
    <location>
        <begin position="267"/>
        <end position="275"/>
    </location>
</feature>
<feature type="helix" evidence="19">
    <location>
        <begin position="279"/>
        <end position="283"/>
    </location>
</feature>
<feature type="strand" evidence="19">
    <location>
        <begin position="287"/>
        <end position="290"/>
    </location>
</feature>
<feature type="helix" evidence="19">
    <location>
        <begin position="293"/>
        <end position="305"/>
    </location>
</feature>
<feature type="helix" evidence="19">
    <location>
        <begin position="310"/>
        <end position="312"/>
    </location>
</feature>
<dbReference type="EC" id="2.7.6.1" evidence="3 4 5 7 13 14 16"/>
<dbReference type="EMBL" id="M13174">
    <property type="protein sequence ID" value="AAA24431.1"/>
    <property type="molecule type" value="Genomic_DNA"/>
</dbReference>
<dbReference type="EMBL" id="U00096">
    <property type="protein sequence ID" value="AAC74291.1"/>
    <property type="molecule type" value="Genomic_DNA"/>
</dbReference>
<dbReference type="EMBL" id="AP009048">
    <property type="protein sequence ID" value="BAA36065.1"/>
    <property type="molecule type" value="Genomic_DNA"/>
</dbReference>
<dbReference type="PIR" id="D64867">
    <property type="entry name" value="KIECRY"/>
</dbReference>
<dbReference type="RefSeq" id="NP_415725.1">
    <property type="nucleotide sequence ID" value="NC_000913.3"/>
</dbReference>
<dbReference type="RefSeq" id="WP_001298109.1">
    <property type="nucleotide sequence ID" value="NZ_STEB01000023.1"/>
</dbReference>
<dbReference type="PDB" id="4S2U">
    <property type="method" value="X-ray"/>
    <property type="resolution" value="2.71 A"/>
    <property type="chains" value="A=2-315"/>
</dbReference>
<dbReference type="PDB" id="6ASV">
    <property type="method" value="X-ray"/>
    <property type="resolution" value="2.21 A"/>
    <property type="chains" value="A/B/C=1-315"/>
</dbReference>
<dbReference type="PDB" id="7XMU">
    <property type="method" value="EM"/>
    <property type="resolution" value="2.30 A"/>
    <property type="chains" value="A/B/C/D/E/F=1-315"/>
</dbReference>
<dbReference type="PDB" id="7XMV">
    <property type="method" value="EM"/>
    <property type="resolution" value="2.60 A"/>
    <property type="chains" value="A/B/C/D/E/F=1-315"/>
</dbReference>
<dbReference type="PDB" id="7XN3">
    <property type="method" value="EM"/>
    <property type="resolution" value="2.90 A"/>
    <property type="chains" value="A/B/C/D/E/F=1-315"/>
</dbReference>
<dbReference type="PDBsum" id="4S2U"/>
<dbReference type="PDBsum" id="6ASV"/>
<dbReference type="PDBsum" id="7XMU"/>
<dbReference type="PDBsum" id="7XMV"/>
<dbReference type="PDBsum" id="7XN3"/>
<dbReference type="EMDB" id="EMD-33305"/>
<dbReference type="EMDB" id="EMD-33306"/>
<dbReference type="EMDB" id="EMD-33309"/>
<dbReference type="SMR" id="P0A717"/>
<dbReference type="BioGRID" id="4260813">
    <property type="interactions" value="178"/>
</dbReference>
<dbReference type="DIP" id="DIP-35839N"/>
<dbReference type="FunCoup" id="P0A717">
    <property type="interactions" value="1151"/>
</dbReference>
<dbReference type="IntAct" id="P0A717">
    <property type="interactions" value="155"/>
</dbReference>
<dbReference type="STRING" id="511145.b1207"/>
<dbReference type="jPOST" id="P0A717"/>
<dbReference type="PaxDb" id="511145-b1207"/>
<dbReference type="EnsemblBacteria" id="AAC74291">
    <property type="protein sequence ID" value="AAC74291"/>
    <property type="gene ID" value="b1207"/>
</dbReference>
<dbReference type="GeneID" id="93775272"/>
<dbReference type="GeneID" id="945772"/>
<dbReference type="KEGG" id="ecj:JW1198"/>
<dbReference type="KEGG" id="eco:b1207"/>
<dbReference type="KEGG" id="ecoc:C3026_07095"/>
<dbReference type="PATRIC" id="fig|511145.12.peg.1255"/>
<dbReference type="EchoBASE" id="EB0767"/>
<dbReference type="eggNOG" id="COG0462">
    <property type="taxonomic scope" value="Bacteria"/>
</dbReference>
<dbReference type="HOGENOM" id="CLU_033546_2_0_6"/>
<dbReference type="InParanoid" id="P0A717"/>
<dbReference type="OMA" id="YFGWARQ"/>
<dbReference type="OrthoDB" id="9777067at2"/>
<dbReference type="PhylomeDB" id="P0A717"/>
<dbReference type="BioCyc" id="EcoCyc:PRPPSYN-MONOMER"/>
<dbReference type="BioCyc" id="MetaCyc:PRPPSYN-MONOMER"/>
<dbReference type="BRENDA" id="2.7.6.1">
    <property type="organism ID" value="2026"/>
</dbReference>
<dbReference type="SABIO-RK" id="P0A717"/>
<dbReference type="UniPathway" id="UPA00087">
    <property type="reaction ID" value="UER00172"/>
</dbReference>
<dbReference type="PRO" id="PR:P0A717"/>
<dbReference type="Proteomes" id="UP000000625">
    <property type="component" value="Chromosome"/>
</dbReference>
<dbReference type="GO" id="GO:0005737">
    <property type="term" value="C:cytoplasm"/>
    <property type="evidence" value="ECO:0000318"/>
    <property type="project" value="GO_Central"/>
</dbReference>
<dbReference type="GO" id="GO:0005829">
    <property type="term" value="C:cytosol"/>
    <property type="evidence" value="ECO:0000314"/>
    <property type="project" value="EcoCyc"/>
</dbReference>
<dbReference type="GO" id="GO:0002189">
    <property type="term" value="C:ribose phosphate diphosphokinase complex"/>
    <property type="evidence" value="ECO:0000318"/>
    <property type="project" value="GO_Central"/>
</dbReference>
<dbReference type="GO" id="GO:0043531">
    <property type="term" value="F:ADP binding"/>
    <property type="evidence" value="ECO:0000314"/>
    <property type="project" value="EcoCyc"/>
</dbReference>
<dbReference type="GO" id="GO:0005524">
    <property type="term" value="F:ATP binding"/>
    <property type="evidence" value="ECO:0007669"/>
    <property type="project" value="UniProtKB-KW"/>
</dbReference>
<dbReference type="GO" id="GO:0042802">
    <property type="term" value="F:identical protein binding"/>
    <property type="evidence" value="ECO:0000314"/>
    <property type="project" value="EcoCyc"/>
</dbReference>
<dbReference type="GO" id="GO:0016301">
    <property type="term" value="F:kinase activity"/>
    <property type="evidence" value="ECO:0007669"/>
    <property type="project" value="UniProtKB-KW"/>
</dbReference>
<dbReference type="GO" id="GO:0000287">
    <property type="term" value="F:magnesium ion binding"/>
    <property type="evidence" value="ECO:0000314"/>
    <property type="project" value="EcoCyc"/>
</dbReference>
<dbReference type="GO" id="GO:0042301">
    <property type="term" value="F:phosphate ion binding"/>
    <property type="evidence" value="ECO:0000314"/>
    <property type="project" value="EcoCyc"/>
</dbReference>
<dbReference type="GO" id="GO:0004749">
    <property type="term" value="F:ribose phosphate diphosphokinase activity"/>
    <property type="evidence" value="ECO:0000314"/>
    <property type="project" value="EcoCyc"/>
</dbReference>
<dbReference type="GO" id="GO:0006015">
    <property type="term" value="P:5-phosphoribose 1-diphosphate biosynthetic process"/>
    <property type="evidence" value="ECO:0000315"/>
    <property type="project" value="EcoCyc"/>
</dbReference>
<dbReference type="GO" id="GO:0034214">
    <property type="term" value="P:protein hexamerization"/>
    <property type="evidence" value="ECO:0000314"/>
    <property type="project" value="EcoCyc"/>
</dbReference>
<dbReference type="GO" id="GO:0006164">
    <property type="term" value="P:purine nucleotide biosynthetic process"/>
    <property type="evidence" value="ECO:0000318"/>
    <property type="project" value="GO_Central"/>
</dbReference>
<dbReference type="GO" id="GO:0009156">
    <property type="term" value="P:ribonucleoside monophosphate biosynthetic process"/>
    <property type="evidence" value="ECO:0007669"/>
    <property type="project" value="InterPro"/>
</dbReference>
<dbReference type="CDD" id="cd06223">
    <property type="entry name" value="PRTases_typeI"/>
    <property type="match status" value="1"/>
</dbReference>
<dbReference type="FunFam" id="3.40.50.2020:FF:000001">
    <property type="entry name" value="Ribose-phosphate pyrophosphokinase"/>
    <property type="match status" value="1"/>
</dbReference>
<dbReference type="FunFam" id="3.40.50.2020:FF:000005">
    <property type="entry name" value="Ribose-phosphate pyrophosphokinase 1"/>
    <property type="match status" value="1"/>
</dbReference>
<dbReference type="Gene3D" id="3.40.50.2020">
    <property type="match status" value="2"/>
</dbReference>
<dbReference type="HAMAP" id="MF_00583_B">
    <property type="entry name" value="RibP_PPkinase_B"/>
    <property type="match status" value="1"/>
</dbReference>
<dbReference type="InterPro" id="IPR000842">
    <property type="entry name" value="PRib_PP_synth_CS"/>
</dbReference>
<dbReference type="InterPro" id="IPR029099">
    <property type="entry name" value="Pribosyltran_N"/>
</dbReference>
<dbReference type="InterPro" id="IPR000836">
    <property type="entry name" value="PRibTrfase_dom"/>
</dbReference>
<dbReference type="InterPro" id="IPR029057">
    <property type="entry name" value="PRTase-like"/>
</dbReference>
<dbReference type="InterPro" id="IPR005946">
    <property type="entry name" value="Rib-P_diPkinase"/>
</dbReference>
<dbReference type="InterPro" id="IPR037515">
    <property type="entry name" value="Rib-P_diPkinase_bac"/>
</dbReference>
<dbReference type="NCBIfam" id="NF002320">
    <property type="entry name" value="PRK01259.1"/>
    <property type="match status" value="1"/>
</dbReference>
<dbReference type="NCBIfam" id="TIGR01251">
    <property type="entry name" value="ribP_PPkin"/>
    <property type="match status" value="1"/>
</dbReference>
<dbReference type="PANTHER" id="PTHR10210">
    <property type="entry name" value="RIBOSE-PHOSPHATE DIPHOSPHOKINASE FAMILY MEMBER"/>
    <property type="match status" value="1"/>
</dbReference>
<dbReference type="PANTHER" id="PTHR10210:SF41">
    <property type="entry name" value="RIBOSE-PHOSPHATE PYROPHOSPHOKINASE 1, CHLOROPLASTIC"/>
    <property type="match status" value="1"/>
</dbReference>
<dbReference type="Pfam" id="PF14572">
    <property type="entry name" value="Pribosyl_synth"/>
    <property type="match status" value="1"/>
</dbReference>
<dbReference type="Pfam" id="PF13793">
    <property type="entry name" value="Pribosyltran_N"/>
    <property type="match status" value="1"/>
</dbReference>
<dbReference type="SMART" id="SM01400">
    <property type="entry name" value="Pribosyltran_N"/>
    <property type="match status" value="1"/>
</dbReference>
<dbReference type="SUPFAM" id="SSF53271">
    <property type="entry name" value="PRTase-like"/>
    <property type="match status" value="1"/>
</dbReference>
<dbReference type="PROSITE" id="PS00114">
    <property type="entry name" value="PRPP_SYNTHASE"/>
    <property type="match status" value="1"/>
</dbReference>